<organism>
    <name type="scientific">Streptococcus downei</name>
    <name type="common">Streptococcus sobrinus</name>
    <dbReference type="NCBI Taxonomy" id="1317"/>
    <lineage>
        <taxon>Bacteria</taxon>
        <taxon>Bacillati</taxon>
        <taxon>Bacillota</taxon>
        <taxon>Bacilli</taxon>
        <taxon>Lactobacillales</taxon>
        <taxon>Streptococcaceae</taxon>
        <taxon>Streptococcus</taxon>
    </lineage>
</organism>
<proteinExistence type="inferred from homology"/>
<comment type="function">
    <text>Production of extracellular glucans, that are thought to play a key role in the development of the dental plaque because of their ability to adhere to smooth surfaces and mediate the aggregation of bacterial cells and food debris.</text>
</comment>
<comment type="catalytic activity">
    <reaction>
        <text>[(1-&gt;6)-alpha-D-glucosyl](n) + sucrose = [(1-&gt;6)-alpha-D-glucosyl](n+1) + D-fructose</text>
        <dbReference type="Rhea" id="RHEA:18825"/>
        <dbReference type="Rhea" id="RHEA-COMP:11144"/>
        <dbReference type="Rhea" id="RHEA-COMP:11145"/>
        <dbReference type="ChEBI" id="CHEBI:17992"/>
        <dbReference type="ChEBI" id="CHEBI:18269"/>
        <dbReference type="ChEBI" id="CHEBI:37721"/>
        <dbReference type="EC" id="2.4.1.5"/>
    </reaction>
</comment>
<comment type="activity regulation">
    <text>Glucan synthesis by GTF-S is independent of primer glucan unlike GTF-I.</text>
</comment>
<comment type="miscellaneous">
    <text>Synthesizes water-soluble glucans (alpha 1,6-glucose).</text>
</comment>
<comment type="similarity">
    <text evidence="3">Belongs to the glycosyl hydrolase 70 family.</text>
</comment>
<accession>P29336</accession>
<keyword id="KW-0214">Dental caries</keyword>
<keyword id="KW-0328">Glycosyltransferase</keyword>
<keyword id="KW-0677">Repeat</keyword>
<keyword id="KW-0732">Signal</keyword>
<keyword id="KW-0808">Transferase</keyword>
<evidence type="ECO:0000255" key="1"/>
<evidence type="ECO:0000256" key="2">
    <source>
        <dbReference type="SAM" id="MobiDB-lite"/>
    </source>
</evidence>
<evidence type="ECO:0000305" key="3"/>
<name>GTFS_STRDO</name>
<sequence>MEKNLRYKLHKVKKQWVAIGVTTVTLSFLAGGQVVAADTNNNDGTSVQVNKMVPSDPKFDAQAQNGQLAQAMFKAANQADQTATSQVSPATDGRVDNQVTPAANQPAANVANQDVANPATDAGALNRQSAADTSTDGKAVPQTSDQPGHLETVDGKTYYVDANGQRLKNYSMVIDGKTYYFDGQTGEAQTDLPKTGQANQDNVPDSYQANNQAYSNEASSFETVDNYLTADSWYRPRKILKNGQSWQASSEGDLRPILMTWWPDAATKAAYANFWAKEGLISGSYRQNSANLDAATQNIQSAIEKKIASEGNTNWLRDKMSQFVKSQNQWSIASENETVYPNQDHMQGGALLFSNSKDTEHANSDWRLLNRNPTFQTGKQKYFTTNYAGYELLLANDVDNSNPVVQAEQLNHLHYLMNWGDIVMGDKDANFDGVRVDAVDNVNADLLQIQRDYYKAKYGTDQNEKNAIDHLSILEAWSGNDNDYVKDQNNFSLSIDNDQRSGMLKAFGYASAYRGNLSNLATAGLKNRSANPDSDPVPNYVFIRAHDSEVQTRIAKIIREKLGKTNADGLTNLTLDDLNKAFDIYNQDMNATDKVYYPNNLPMAYAWMLQNKDTVTRVYYGDMYTDNGQYMATKTPFYNAIETLLKGRIKYVAGGQAVSYKQDWSSGILTSVRYGKGANSASDAGNTETRNSGMALLINNRPNFRAYRNLTLNMGAAHKSQAYRPLLLSTKDGIATYLNDSDVDSRQYKYTDSQGNLSFSASELQSVANAQVSGMIQVWVPVGAADNQDVRTSPSTQATKDGNIYHQSDALDSQVIYEGFSNFQAFAQSPDQYTNAVIAKNGDLFKSWGITQFEMAPQYVSSEDGTFLDSVILNGYAFSDRYDLAMSKNNKYGSKQDLANAIKGLQSAGIKVLSDLVPNQLYNLPGKEVVTATRVNQYGQAKSGATINKTPYVANTRSYGDYQEQYGGKFLDDLQKLYPRLFSTKQISTGKPIDPSVKITNWSAKYFNGSNILGRGAKYVLSEGNKYLNLADGKLFLPTVLNNTYGQPQVSANGFISKNGGIHYLDKNGQEVKNRFKEISGSWYYFDSDGKMATGKTKIGNDTYLFMPNGKQLKEGVWYDGKKAYYYDDNGRTWTNKGFVEFRVDGQDKWRYFNGDGTIAIGLVSLDNRTLYFDAYGYQVKGQTVTINGKSYTFDADQGDLVQTDNANPAPQGQAGWKLLGDNQWGYRKDGQLLTGEQTIDGQKVFFQDNGVQVKGGTATDASGVLRFYDRDQGHQVGKGWYSTSDDNWVYVNESGQVLTGLQTIDGQTVYFDDKGIQAKGKAVWDENGNLRYFDADSGNMLRDRWKNVDGNWYYFNRNGLATRW</sequence>
<reference key="1">
    <citation type="journal article" date="1990" name="Infect. Immun.">
        <title>Analysis of the Streptococcus downei gtfS gene, which specifies a glucosyltransferase that synthesizes soluble glucans.</title>
        <authorList>
            <person name="Gilmore K.S."/>
            <person name="Russell R.R."/>
            <person name="Ferretti J.J."/>
        </authorList>
    </citation>
    <scope>NUCLEOTIDE SEQUENCE [GENOMIC DNA]</scope>
    <source>
        <strain>MFE28</strain>
    </source>
</reference>
<feature type="signal peptide" description="Or 37" evidence="1">
    <location>
        <begin position="1"/>
        <end position="36"/>
    </location>
</feature>
<feature type="chain" id="PRO_0000021388" description="Glucosyltransferase-S">
    <location>
        <begin position="37"/>
        <end position="1365"/>
    </location>
</feature>
<feature type="repeat" description="Cell wall-binding 1">
    <location>
        <begin position="146"/>
        <end position="166"/>
    </location>
</feature>
<feature type="repeat" description="Cell wall-binding 2">
    <location>
        <begin position="168"/>
        <end position="187"/>
    </location>
</feature>
<feature type="repeat" description="Cell wall-binding 3">
    <location>
        <begin position="1052"/>
        <end position="1071"/>
    </location>
</feature>
<feature type="repeat" description="Cell wall-binding 4">
    <location>
        <begin position="1073"/>
        <end position="1092"/>
    </location>
</feature>
<feature type="repeat" description="Cell wall-binding 5">
    <location>
        <begin position="1093"/>
        <end position="1112"/>
    </location>
</feature>
<feature type="repeat" description="Cell wall-binding 6">
    <location>
        <begin position="1113"/>
        <end position="1133"/>
    </location>
</feature>
<feature type="repeat" description="Cell wall-binding 7">
    <location>
        <begin position="1136"/>
        <end position="1159"/>
    </location>
</feature>
<feature type="repeat" description="Cell wall-binding 8">
    <location>
        <begin position="1160"/>
        <end position="1179"/>
    </location>
</feature>
<feature type="repeat" description="Cell wall-binding 9">
    <location>
        <begin position="1234"/>
        <end position="1253"/>
    </location>
</feature>
<feature type="repeat" description="Cell wall-binding 10">
    <location>
        <begin position="1278"/>
        <end position="1298"/>
    </location>
</feature>
<feature type="repeat" description="Cell wall-binding 11">
    <location>
        <begin position="1299"/>
        <end position="1318"/>
    </location>
</feature>
<feature type="repeat" description="Cell wall-binding 12">
    <location>
        <begin position="1343"/>
        <end position="1362"/>
    </location>
</feature>
<feature type="region of interest" description="Disordered" evidence="2">
    <location>
        <begin position="80"/>
        <end position="99"/>
    </location>
</feature>
<feature type="region of interest" description="Disordered" evidence="2">
    <location>
        <begin position="127"/>
        <end position="152"/>
    </location>
</feature>
<feature type="region of interest" description="Catalytic; approximate">
    <location>
        <begin position="200"/>
        <end position="1000"/>
    </location>
</feature>
<feature type="compositionally biased region" description="Polar residues" evidence="2">
    <location>
        <begin position="80"/>
        <end position="89"/>
    </location>
</feature>
<feature type="compositionally biased region" description="Polar residues" evidence="2">
    <location>
        <begin position="127"/>
        <end position="146"/>
    </location>
</feature>
<dbReference type="EC" id="2.4.1.5"/>
<dbReference type="EMBL" id="M30943">
    <property type="protein sequence ID" value="AAA26898.1"/>
    <property type="molecule type" value="Genomic_DNA"/>
</dbReference>
<dbReference type="SMR" id="P29336"/>
<dbReference type="CAZy" id="GH70">
    <property type="family name" value="Glycoside Hydrolase Family 70"/>
</dbReference>
<dbReference type="GO" id="GO:0047849">
    <property type="term" value="F:dextransucrase activity"/>
    <property type="evidence" value="ECO:0007669"/>
    <property type="project" value="UniProtKB-EC"/>
</dbReference>
<dbReference type="GO" id="GO:0046527">
    <property type="term" value="F:glucosyltransferase activity"/>
    <property type="evidence" value="ECO:0007669"/>
    <property type="project" value="InterPro"/>
</dbReference>
<dbReference type="GO" id="GO:0009250">
    <property type="term" value="P:glucan biosynthetic process"/>
    <property type="evidence" value="ECO:0007669"/>
    <property type="project" value="InterPro"/>
</dbReference>
<dbReference type="Gene3D" id="2.30.30.20">
    <property type="entry name" value="Aspartate carbamoyltransferase regulatory subunit, C-terminal domain"/>
    <property type="match status" value="1"/>
</dbReference>
<dbReference type="Gene3D" id="2.10.270.10">
    <property type="entry name" value="Cholin Binding"/>
    <property type="match status" value="4"/>
</dbReference>
<dbReference type="Gene3D" id="3.20.20.470">
    <property type="entry name" value="Glucansucrase"/>
    <property type="match status" value="1"/>
</dbReference>
<dbReference type="Gene3D" id="2.30.30.420">
    <property type="entry name" value="glucansucrase"/>
    <property type="match status" value="1"/>
</dbReference>
<dbReference type="InterPro" id="IPR018337">
    <property type="entry name" value="Cell_wall/Cho-bd_repeat"/>
</dbReference>
<dbReference type="InterPro" id="IPR027636">
    <property type="entry name" value="Glucan-bd_rpt"/>
</dbReference>
<dbReference type="InterPro" id="IPR003318">
    <property type="entry name" value="Glyco_hydro70cat"/>
</dbReference>
<dbReference type="InterPro" id="IPR017853">
    <property type="entry name" value="Glycoside_hydrolase_SF"/>
</dbReference>
<dbReference type="InterPro" id="IPR022263">
    <property type="entry name" value="KxYKxGKxW"/>
</dbReference>
<dbReference type="NCBIfam" id="TIGR04035">
    <property type="entry name" value="glucan_65_rpt"/>
    <property type="match status" value="4"/>
</dbReference>
<dbReference type="NCBIfam" id="TIGR03715">
    <property type="entry name" value="KxYKxGKxW"/>
    <property type="match status" value="1"/>
</dbReference>
<dbReference type="Pfam" id="PF19127">
    <property type="entry name" value="Choline_bind_3"/>
    <property type="match status" value="5"/>
</dbReference>
<dbReference type="Pfam" id="PF02324">
    <property type="entry name" value="Glyco_hydro_70"/>
    <property type="match status" value="1"/>
</dbReference>
<dbReference type="Pfam" id="PF19258">
    <property type="entry name" value="KxYKxGKxW_sig"/>
    <property type="match status" value="1"/>
</dbReference>
<dbReference type="SUPFAM" id="SSF51445">
    <property type="entry name" value="(Trans)glycosidases"/>
    <property type="match status" value="2"/>
</dbReference>
<dbReference type="SUPFAM" id="SSF69360">
    <property type="entry name" value="Cell wall binding repeat"/>
    <property type="match status" value="3"/>
</dbReference>
<dbReference type="PROSITE" id="PS51170">
    <property type="entry name" value="CW"/>
    <property type="match status" value="12"/>
</dbReference>
<gene>
    <name type="primary">gtfS</name>
</gene>
<protein>
    <recommendedName>
        <fullName>Glucosyltransferase-S</fullName>
        <shortName>GTF-S</shortName>
        <ecNumber>2.4.1.5</ecNumber>
    </recommendedName>
    <alternativeName>
        <fullName>Dextransucrase</fullName>
    </alternativeName>
    <alternativeName>
        <fullName>Sucrose 6-glucosyltransferase</fullName>
    </alternativeName>
</protein>